<reference key="1">
    <citation type="journal article" date="1993" name="Gene">
        <title>Evolutionary divergence of pobA, the structural gene encoding p-hydroxybenzoate hydroxylase in an Acinetobacter calcoaceticus strain well-suited for genetic analysis.</title>
        <authorList>
            <person name="Dimarco A.A."/>
            <person name="Averhoff B.A."/>
            <person name="Kim E.E."/>
            <person name="Ornston L.N."/>
        </authorList>
    </citation>
    <scope>NUCLEOTIDE SEQUENCE [GENOMIC DNA]</scope>
</reference>
<reference key="2">
    <citation type="journal article" date="2004" name="Nucleic Acids Res.">
        <title>Unique features revealed by the genome sequence of Acinetobacter sp. ADP1, a versatile and naturally transformation competent bacterium.</title>
        <authorList>
            <person name="Barbe V."/>
            <person name="Vallenet D."/>
            <person name="Fonknechten N."/>
            <person name="Kreimeyer A."/>
            <person name="Oztas S."/>
            <person name="Labarre L."/>
            <person name="Cruveiller S."/>
            <person name="Robert C."/>
            <person name="Duprat S."/>
            <person name="Wincker P."/>
            <person name="Ornston L.N."/>
            <person name="Weissenbach J."/>
            <person name="Marliere P."/>
            <person name="Cohen G.N."/>
            <person name="Medigue C."/>
        </authorList>
    </citation>
    <scope>NUCLEOTIDE SEQUENCE [LARGE SCALE GENOMIC DNA]</scope>
    <source>
        <strain>ATCC 33305 / BD413 / ADP1</strain>
    </source>
</reference>
<keyword id="KW-0058">Aromatic hydrocarbons catabolism</keyword>
<keyword id="KW-0274">FAD</keyword>
<keyword id="KW-0285">Flavoprotein</keyword>
<keyword id="KW-0503">Monooxygenase</keyword>
<keyword id="KW-0521">NADP</keyword>
<keyword id="KW-0560">Oxidoreductase</keyword>
<proteinExistence type="inferred from homology"/>
<sequence length="404" mass="45271">MQTMKTKVAIIGSGPAGLLLGQLLYKAGIEHVIVEQRSADYVASRIRAGILEQVSVDLLEQAGVDQNLKEKGLPHSGIEILTNGQKFRVDLSALTQGKQVTVYGQTEVTKDLMQAREQAGLCSFYESNDVQIHDFYNAPKVTFESNGTHYQIECDFIAGCDGYHGVCRASVPQDKIKTFEKVYPFGWLGVLADVPPVADELIYVQSERGFALCSMRSETRSRYYIQVPLTDHVENWSDDQFWEELKNRLDPESCEKLVTGPSIEKSIAPLRSFVTEPMRFGKLFLAGDAAHIVPPTGAKGLNLAASDIAYLSSALIEFYTQGSEQGIDQYSEKCLQRVWKAERFSWWMTHLLHRFETESEFDHKIKQAELSYILGSTAGQTTLAENYVGLPYEIKSLDYLKHAS</sequence>
<accession>Q03298</accession>
<evidence type="ECO:0000250" key="1">
    <source>
        <dbReference type="UniProtKB" id="P20586"/>
    </source>
</evidence>
<comment type="function">
    <text evidence="1">Catalyzes the incorporation of an atom of dioxygen into p-hydroxybenzoate (p-OHB) to form 3,4-dihydroxybenzoate (3,4DOHB). The reaction occurs in two parts: reduction of the flavin adenine dinucleotide (FAD) in the enzyme by reduced nicotinamide adenine dinucleotide phosphate (NADPH) in response to binding p-hydroxybenzoate to the enzyme and oxidation of reduced FAD with oxygen to form a hydroperoxide, which then oxygenates p-hydroxybenzoate.</text>
</comment>
<comment type="catalytic activity">
    <reaction evidence="1">
        <text>4-hydroxybenzoate + NADPH + O2 + H(+) = 3,4-dihydroxybenzoate + NADP(+) + H2O</text>
        <dbReference type="Rhea" id="RHEA:19477"/>
        <dbReference type="ChEBI" id="CHEBI:15377"/>
        <dbReference type="ChEBI" id="CHEBI:15378"/>
        <dbReference type="ChEBI" id="CHEBI:15379"/>
        <dbReference type="ChEBI" id="CHEBI:17879"/>
        <dbReference type="ChEBI" id="CHEBI:36241"/>
        <dbReference type="ChEBI" id="CHEBI:57783"/>
        <dbReference type="ChEBI" id="CHEBI:58349"/>
        <dbReference type="EC" id="1.14.13.2"/>
    </reaction>
</comment>
<comment type="cofactor">
    <cofactor evidence="1">
        <name>FAD</name>
        <dbReference type="ChEBI" id="CHEBI:57692"/>
    </cofactor>
    <text evidence="1">Binds 1 FAD per subunit.</text>
</comment>
<comment type="pathway">
    <text evidence="1">Aromatic compound metabolism; benzoate degradation via hydroxylation; 3,4-dihydroxybenzoate from benzoate: step 2/2.</text>
</comment>
<comment type="subunit">
    <text evidence="1">Homodimer.</text>
</comment>
<comment type="similarity">
    <text evidence="1">Belongs to the aromatic-ring hydroxylase family.</text>
</comment>
<gene>
    <name type="primary">pobA</name>
    <name type="ordered locus">ACIAD1719</name>
</gene>
<protein>
    <recommendedName>
        <fullName evidence="1">p-hydroxybenzoate hydroxylase</fullName>
        <shortName evidence="1">PHBH</shortName>
        <ecNumber evidence="1">1.14.13.2</ecNumber>
    </recommendedName>
    <alternativeName>
        <fullName evidence="1">4-hydroxybenzoate 3-monooxygenase</fullName>
    </alternativeName>
</protein>
<dbReference type="EC" id="1.14.13.2" evidence="1"/>
<dbReference type="EMBL" id="L05770">
    <property type="protein sequence ID" value="AAC37163.1"/>
    <property type="molecule type" value="Genomic_DNA"/>
</dbReference>
<dbReference type="EMBL" id="CR543861">
    <property type="protein sequence ID" value="CAG68561.1"/>
    <property type="molecule type" value="Genomic_DNA"/>
</dbReference>
<dbReference type="RefSeq" id="WP_004926674.1">
    <property type="nucleotide sequence ID" value="NC_005966.1"/>
</dbReference>
<dbReference type="SMR" id="Q03298"/>
<dbReference type="STRING" id="202950.GCA_001485005_03097"/>
<dbReference type="GeneID" id="45234106"/>
<dbReference type="KEGG" id="aci:ACIAD1719"/>
<dbReference type="eggNOG" id="COG0654">
    <property type="taxonomic scope" value="Bacteria"/>
</dbReference>
<dbReference type="HOGENOM" id="CLU_057691_0_0_6"/>
<dbReference type="OrthoDB" id="8672648at2"/>
<dbReference type="BioCyc" id="ASP62977:ACIAD_RS07925-MONOMER"/>
<dbReference type="UniPathway" id="UPA00156">
    <property type="reaction ID" value="UER00257"/>
</dbReference>
<dbReference type="Proteomes" id="UP000000430">
    <property type="component" value="Chromosome"/>
</dbReference>
<dbReference type="GO" id="GO:0106356">
    <property type="term" value="F:4-hydroxybenzoate 3-monooxygenase (NADPH) activity"/>
    <property type="evidence" value="ECO:0007669"/>
    <property type="project" value="RHEA"/>
</dbReference>
<dbReference type="GO" id="GO:0018659">
    <property type="term" value="F:4-hydroxybenzoate 3-monooxygenase activity"/>
    <property type="evidence" value="ECO:0007669"/>
    <property type="project" value="UniProtKB-EC"/>
</dbReference>
<dbReference type="GO" id="GO:0071949">
    <property type="term" value="F:FAD binding"/>
    <property type="evidence" value="ECO:0007669"/>
    <property type="project" value="InterPro"/>
</dbReference>
<dbReference type="GO" id="GO:0043640">
    <property type="term" value="P:benzoate catabolic process via hydroxylation"/>
    <property type="evidence" value="ECO:0007669"/>
    <property type="project" value="UniProtKB-UniPathway"/>
</dbReference>
<dbReference type="Gene3D" id="3.30.9.10">
    <property type="entry name" value="D-Amino Acid Oxidase, subunit A, domain 2"/>
    <property type="match status" value="1"/>
</dbReference>
<dbReference type="Gene3D" id="3.50.50.60">
    <property type="entry name" value="FAD/NAD(P)-binding domain"/>
    <property type="match status" value="1"/>
</dbReference>
<dbReference type="InterPro" id="IPR002938">
    <property type="entry name" value="FAD-bd"/>
</dbReference>
<dbReference type="InterPro" id="IPR036188">
    <property type="entry name" value="FAD/NAD-bd_sf"/>
</dbReference>
<dbReference type="InterPro" id="IPR012733">
    <property type="entry name" value="HB_mOase"/>
</dbReference>
<dbReference type="InterPro" id="IPR050641">
    <property type="entry name" value="RIFMO-like"/>
</dbReference>
<dbReference type="NCBIfam" id="TIGR02360">
    <property type="entry name" value="pbenz_hydroxyl"/>
    <property type="match status" value="1"/>
</dbReference>
<dbReference type="NCBIfam" id="NF006091">
    <property type="entry name" value="PRK08243.1"/>
    <property type="match status" value="1"/>
</dbReference>
<dbReference type="PANTHER" id="PTHR43004:SF3">
    <property type="entry name" value="P-HYDROXYBENZOATE HYDROXYLASE"/>
    <property type="match status" value="1"/>
</dbReference>
<dbReference type="PANTHER" id="PTHR43004">
    <property type="entry name" value="TRK SYSTEM POTASSIUM UPTAKE PROTEIN"/>
    <property type="match status" value="1"/>
</dbReference>
<dbReference type="Pfam" id="PF01494">
    <property type="entry name" value="FAD_binding_3"/>
    <property type="match status" value="1"/>
</dbReference>
<dbReference type="PRINTS" id="PR00420">
    <property type="entry name" value="RNGMNOXGNASE"/>
</dbReference>
<dbReference type="SUPFAM" id="SSF54373">
    <property type="entry name" value="FAD-linked reductases, C-terminal domain"/>
    <property type="match status" value="1"/>
</dbReference>
<dbReference type="SUPFAM" id="SSF51905">
    <property type="entry name" value="FAD/NAD(P)-binding domain"/>
    <property type="match status" value="1"/>
</dbReference>
<organism>
    <name type="scientific">Acinetobacter baylyi (strain ATCC 33305 / BD413 / ADP1)</name>
    <dbReference type="NCBI Taxonomy" id="62977"/>
    <lineage>
        <taxon>Bacteria</taxon>
        <taxon>Pseudomonadati</taxon>
        <taxon>Pseudomonadota</taxon>
        <taxon>Gammaproteobacteria</taxon>
        <taxon>Moraxellales</taxon>
        <taxon>Moraxellaceae</taxon>
        <taxon>Acinetobacter</taxon>
    </lineage>
</organism>
<feature type="chain" id="PRO_0000058380" description="p-hydroxybenzoate hydroxylase">
    <location>
        <begin position="1"/>
        <end position="404"/>
    </location>
</feature>
<feature type="binding site" evidence="1">
    <location>
        <position position="35"/>
    </location>
    <ligand>
        <name>FAD</name>
        <dbReference type="ChEBI" id="CHEBI:57692"/>
    </ligand>
</feature>
<feature type="binding site" evidence="1">
    <location>
        <begin position="45"/>
        <end position="50"/>
    </location>
    <ligand>
        <name>FAD</name>
        <dbReference type="ChEBI" id="CHEBI:57692"/>
    </ligand>
</feature>
<feature type="binding site" evidence="1">
    <location>
        <position position="105"/>
    </location>
    <ligand>
        <name>FAD</name>
        <dbReference type="ChEBI" id="CHEBI:57692"/>
    </ligand>
</feature>
<feature type="binding site" evidence="1">
    <location>
        <position position="203"/>
    </location>
    <ligand>
        <name>substrate</name>
    </ligand>
</feature>
<feature type="binding site" evidence="1">
    <location>
        <begin position="214"/>
        <end position="216"/>
    </location>
    <ligand>
        <name>substrate</name>
    </ligand>
</feature>
<feature type="binding site" evidence="1">
    <location>
        <position position="224"/>
    </location>
    <ligand>
        <name>substrate</name>
    </ligand>
</feature>
<feature type="binding site" evidence="1">
    <location>
        <position position="288"/>
    </location>
    <ligand>
        <name>FAD</name>
        <dbReference type="ChEBI" id="CHEBI:57692"/>
    </ligand>
</feature>
<feature type="binding site" evidence="1">
    <location>
        <position position="295"/>
    </location>
    <ligand>
        <name>substrate</name>
    </ligand>
</feature>
<feature type="binding site" evidence="1">
    <location>
        <begin position="301"/>
        <end position="302"/>
    </location>
    <ligand>
        <name>FAD</name>
        <dbReference type="ChEBI" id="CHEBI:57692"/>
    </ligand>
</feature>
<feature type="site" description="Important for catalytic activity" evidence="1">
    <location>
        <position position="203"/>
    </location>
</feature>
<feature type="site" description="Important for catalytic activity" evidence="1">
    <location>
        <position position="387"/>
    </location>
</feature>
<name>PHHY_ACIAD</name>